<feature type="chain" id="PRO_0000185818" description="Glutathione S-transferase Mu 2">
    <location>
        <begin position="1"/>
        <end position="218"/>
    </location>
</feature>
<feature type="domain" description="GST N-terminal">
    <location>
        <begin position="2"/>
        <end position="88"/>
    </location>
</feature>
<feature type="domain" description="GST C-terminal">
    <location>
        <begin position="90"/>
        <end position="208"/>
    </location>
</feature>
<feature type="binding site" evidence="3 4">
    <location>
        <begin position="7"/>
        <end position="8"/>
    </location>
    <ligand>
        <name>glutathione</name>
        <dbReference type="ChEBI" id="CHEBI:57925"/>
    </ligand>
</feature>
<feature type="binding site" evidence="3 4">
    <location>
        <begin position="43"/>
        <end position="46"/>
    </location>
    <ligand>
        <name>glutathione</name>
        <dbReference type="ChEBI" id="CHEBI:57925"/>
    </ligand>
</feature>
<feature type="binding site" evidence="2">
    <location>
        <position position="50"/>
    </location>
    <ligand>
        <name>glutathione</name>
        <dbReference type="ChEBI" id="CHEBI:57925"/>
    </ligand>
</feature>
<feature type="binding site" evidence="3 4">
    <location>
        <begin position="59"/>
        <end position="60"/>
    </location>
    <ligand>
        <name>glutathione</name>
        <dbReference type="ChEBI" id="CHEBI:57925"/>
    </ligand>
</feature>
<feature type="binding site" evidence="3 4">
    <location>
        <begin position="72"/>
        <end position="73"/>
    </location>
    <ligand>
        <name>glutathione</name>
        <dbReference type="ChEBI" id="CHEBI:57925"/>
    </ligand>
</feature>
<feature type="binding site" evidence="1">
    <location>
        <position position="116"/>
    </location>
    <ligand>
        <name>substrate</name>
    </ligand>
</feature>
<feature type="site" description="Important for substrate specificity">
    <location>
        <position position="210"/>
    </location>
</feature>
<feature type="modified residue" description="Phosphoserine" evidence="2">
    <location>
        <position position="27"/>
    </location>
</feature>
<feature type="modified residue" description="Phosphoserine" evidence="2">
    <location>
        <position position="44"/>
    </location>
</feature>
<feature type="splice variant" id="VSP_045614" description="In isoform 2." evidence="7">
    <original>GLEKISAYMKSSRFLPRPVFTKMAVWGNK</original>
    <variation>HS</variation>
    <location>
        <begin position="190"/>
        <end position="218"/>
    </location>
</feature>
<feature type="sequence variant" id="VAR_049486" description="In dbSNP:rs2229050.">
    <original>S</original>
    <variation>N</variation>
    <location>
        <position position="173"/>
    </location>
</feature>
<feature type="mutagenesis site" description="Reduced enzyme activity." evidence="3">
    <original>T</original>
    <variation>C</variation>
    <variation>F</variation>
    <variation>H</variation>
    <variation>I</variation>
    <variation>K</variation>
    <variation>L</variation>
    <variation>R</variation>
    <variation>Y</variation>
    <variation>W</variation>
    <location>
        <position position="210"/>
    </location>
</feature>
<feature type="sequence conflict" description="In Ref. 3; AAV38750." evidence="7" ref="3">
    <original>P</original>
    <variation>S</variation>
    <location>
        <position position="2"/>
    </location>
</feature>
<feature type="sequence conflict" description="In Ref. 3; AAV38750." evidence="7" ref="3">
    <original>N</original>
    <variation>D</variation>
    <location>
        <position position="9"/>
    </location>
</feature>
<feature type="sequence conflict" description="In Ref. 2; BAG61446." evidence="7" ref="2">
    <original>F</original>
    <variation>L</variation>
    <location>
        <position position="51"/>
    </location>
</feature>
<feature type="strand" evidence="14">
    <location>
        <begin position="3"/>
        <end position="11"/>
    </location>
</feature>
<feature type="helix" evidence="14">
    <location>
        <begin position="12"/>
        <end position="14"/>
    </location>
</feature>
<feature type="helix" evidence="14">
    <location>
        <begin position="15"/>
        <end position="23"/>
    </location>
</feature>
<feature type="strand" evidence="14">
    <location>
        <begin position="28"/>
        <end position="33"/>
    </location>
</feature>
<feature type="turn" evidence="14">
    <location>
        <begin position="38"/>
        <end position="41"/>
    </location>
</feature>
<feature type="helix" evidence="14">
    <location>
        <begin position="44"/>
        <end position="47"/>
    </location>
</feature>
<feature type="turn" evidence="14">
    <location>
        <begin position="48"/>
        <end position="51"/>
    </location>
</feature>
<feature type="strand" evidence="14">
    <location>
        <begin position="60"/>
        <end position="65"/>
    </location>
</feature>
<feature type="strand" evidence="14">
    <location>
        <begin position="68"/>
        <end position="72"/>
    </location>
</feature>
<feature type="helix" evidence="14">
    <location>
        <begin position="73"/>
        <end position="83"/>
    </location>
</feature>
<feature type="helix" evidence="14">
    <location>
        <begin position="91"/>
        <end position="116"/>
    </location>
</feature>
<feature type="helix" evidence="14">
    <location>
        <begin position="120"/>
        <end position="142"/>
    </location>
</feature>
<feature type="strand" evidence="14">
    <location>
        <begin position="150"/>
        <end position="152"/>
    </location>
</feature>
<feature type="helix" evidence="14">
    <location>
        <begin position="155"/>
        <end position="170"/>
    </location>
</feature>
<feature type="turn" evidence="14">
    <location>
        <begin position="172"/>
        <end position="177"/>
    </location>
</feature>
<feature type="helix" evidence="14">
    <location>
        <begin position="179"/>
        <end position="190"/>
    </location>
</feature>
<feature type="helix" evidence="14">
    <location>
        <begin position="192"/>
        <end position="199"/>
    </location>
</feature>
<feature type="strand" evidence="13">
    <location>
        <begin position="200"/>
        <end position="202"/>
    </location>
</feature>
<feature type="strand" evidence="12">
    <location>
        <begin position="205"/>
        <end position="207"/>
    </location>
</feature>
<feature type="turn" evidence="11">
    <location>
        <begin position="208"/>
        <end position="212"/>
    </location>
</feature>
<feature type="strand" evidence="14">
    <location>
        <begin position="214"/>
        <end position="216"/>
    </location>
</feature>
<name>GSTM2_HUMAN</name>
<dbReference type="EC" id="2.5.1.18" evidence="3"/>
<dbReference type="EMBL" id="M63509">
    <property type="protein sequence ID" value="AAA60963.1"/>
    <property type="molecule type" value="mRNA"/>
</dbReference>
<dbReference type="EMBL" id="AK299482">
    <property type="protein sequence ID" value="BAG61446.1"/>
    <property type="molecule type" value="mRNA"/>
</dbReference>
<dbReference type="EMBL" id="BT019947">
    <property type="protein sequence ID" value="AAV38750.1"/>
    <property type="molecule type" value="mRNA"/>
</dbReference>
<dbReference type="EMBL" id="AC000031">
    <property type="status" value="NOT_ANNOTATED_CDS"/>
    <property type="molecule type" value="Genomic_DNA"/>
</dbReference>
<dbReference type="EMBL" id="AC000032">
    <property type="status" value="NOT_ANNOTATED_CDS"/>
    <property type="molecule type" value="Genomic_DNA"/>
</dbReference>
<dbReference type="EMBL" id="BC105038">
    <property type="protein sequence ID" value="AAI05039.1"/>
    <property type="molecule type" value="mRNA"/>
</dbReference>
<dbReference type="EMBL" id="BC105066">
    <property type="protein sequence ID" value="AAI05067.1"/>
    <property type="molecule type" value="mRNA"/>
</dbReference>
<dbReference type="CCDS" id="CCDS44192.1">
    <molecule id="P28161-2"/>
</dbReference>
<dbReference type="CCDS" id="CCDS808.1">
    <molecule id="P28161-1"/>
</dbReference>
<dbReference type="PIR" id="A39375">
    <property type="entry name" value="A39375"/>
</dbReference>
<dbReference type="RefSeq" id="NP_000839.1">
    <molecule id="P28161-1"/>
    <property type="nucleotide sequence ID" value="NM_000848.4"/>
</dbReference>
<dbReference type="RefSeq" id="NP_001135840.1">
    <molecule id="P28161-2"/>
    <property type="nucleotide sequence ID" value="NM_001142368.2"/>
</dbReference>
<dbReference type="RefSeq" id="XP_047299631.1">
    <molecule id="P28161-1"/>
    <property type="nucleotide sequence ID" value="XM_047443675.1"/>
</dbReference>
<dbReference type="PDB" id="1HNA">
    <property type="method" value="X-ray"/>
    <property type="resolution" value="1.85 A"/>
    <property type="chains" value="A=2-218"/>
</dbReference>
<dbReference type="PDB" id="1HNB">
    <property type="method" value="X-ray"/>
    <property type="resolution" value="3.50 A"/>
    <property type="chains" value="A/B=2-218"/>
</dbReference>
<dbReference type="PDB" id="1HNC">
    <property type="method" value="X-ray"/>
    <property type="resolution" value="3.00 A"/>
    <property type="chains" value="A/B/C/D=2-218"/>
</dbReference>
<dbReference type="PDB" id="1XW5">
    <property type="method" value="X-ray"/>
    <property type="resolution" value="1.80 A"/>
    <property type="chains" value="A/B=2-218"/>
</dbReference>
<dbReference type="PDB" id="1YKC">
    <property type="method" value="X-ray"/>
    <property type="resolution" value="2.10 A"/>
    <property type="chains" value="A/B=2-218"/>
</dbReference>
<dbReference type="PDB" id="2AB6">
    <property type="method" value="X-ray"/>
    <property type="resolution" value="2.50 A"/>
    <property type="chains" value="A/B/C/D=2-218"/>
</dbReference>
<dbReference type="PDB" id="2C4J">
    <property type="method" value="X-ray"/>
    <property type="resolution" value="1.35 A"/>
    <property type="chains" value="A/B/C/D=2-218"/>
</dbReference>
<dbReference type="PDB" id="2GTU">
    <property type="method" value="X-ray"/>
    <property type="resolution" value="2.55 A"/>
    <property type="chains" value="A/B=2-218"/>
</dbReference>
<dbReference type="PDB" id="3GTU">
    <property type="method" value="X-ray"/>
    <property type="resolution" value="2.80 A"/>
    <property type="chains" value="A/C=2-218"/>
</dbReference>
<dbReference type="PDB" id="3GUR">
    <property type="method" value="X-ray"/>
    <property type="resolution" value="2.50 A"/>
    <property type="chains" value="A/B/C/D=2-218"/>
</dbReference>
<dbReference type="PDB" id="5HWL">
    <property type="method" value="X-ray"/>
    <property type="resolution" value="1.60 A"/>
    <property type="chains" value="A/B=2-218"/>
</dbReference>
<dbReference type="PDBsum" id="1HNA"/>
<dbReference type="PDBsum" id="1HNB"/>
<dbReference type="PDBsum" id="1HNC"/>
<dbReference type="PDBsum" id="1XW5"/>
<dbReference type="PDBsum" id="1YKC"/>
<dbReference type="PDBsum" id="2AB6"/>
<dbReference type="PDBsum" id="2C4J"/>
<dbReference type="PDBsum" id="2GTU"/>
<dbReference type="PDBsum" id="3GTU"/>
<dbReference type="PDBsum" id="3GUR"/>
<dbReference type="PDBsum" id="5HWL"/>
<dbReference type="BMRB" id="P28161"/>
<dbReference type="SMR" id="P28161"/>
<dbReference type="BioGRID" id="109201">
    <property type="interactions" value="22"/>
</dbReference>
<dbReference type="FunCoup" id="P28161">
    <property type="interactions" value="191"/>
</dbReference>
<dbReference type="IntAct" id="P28161">
    <property type="interactions" value="8"/>
</dbReference>
<dbReference type="STRING" id="9606.ENSP00000241337"/>
<dbReference type="BindingDB" id="P28161"/>
<dbReference type="ChEMBL" id="CHEMBL4589"/>
<dbReference type="DrugBank" id="DB00321">
    <property type="generic name" value="Amitriptyline"/>
</dbReference>
<dbReference type="DrugBank" id="DB00291">
    <property type="generic name" value="Chlorambucil"/>
</dbReference>
<dbReference type="DrugBank" id="DB03619">
    <property type="generic name" value="Deoxycholic acid"/>
</dbReference>
<dbReference type="DrugBank" id="DB00143">
    <property type="generic name" value="Glutathione"/>
</dbReference>
<dbReference type="DrugBank" id="DB03310">
    <property type="generic name" value="Glutathione disulfide"/>
</dbReference>
<dbReference type="DrugBank" id="DB02458">
    <property type="generic name" value="S-(2,4-dinitrophenyl)glutathione"/>
</dbReference>
<dbReference type="DrugBank" id="DB04701">
    <property type="generic name" value="S-Methyl glutathione"/>
</dbReference>
<dbReference type="SwissLipids" id="SLP:000001614"/>
<dbReference type="GlyGen" id="P28161">
    <property type="glycosylation" value="2 sites, 1 O-linked glycan (2 sites)"/>
</dbReference>
<dbReference type="iPTMnet" id="P28161"/>
<dbReference type="PhosphoSitePlus" id="P28161"/>
<dbReference type="BioMuta" id="GSTM2"/>
<dbReference type="DMDM" id="232204"/>
<dbReference type="OGP" id="P28161"/>
<dbReference type="REPRODUCTION-2DPAGE" id="P28161"/>
<dbReference type="jPOST" id="P28161"/>
<dbReference type="MassIVE" id="P28161"/>
<dbReference type="PaxDb" id="9606-ENSP00000241337"/>
<dbReference type="PeptideAtlas" id="P28161"/>
<dbReference type="ProteomicsDB" id="19925"/>
<dbReference type="ProteomicsDB" id="54450">
    <molecule id="P28161-1"/>
</dbReference>
<dbReference type="Pumba" id="P28161"/>
<dbReference type="Antibodypedia" id="20072">
    <property type="antibodies" value="244 antibodies from 31 providers"/>
</dbReference>
<dbReference type="CPTC" id="P28161">
    <property type="antibodies" value="3 antibodies"/>
</dbReference>
<dbReference type="DNASU" id="2946"/>
<dbReference type="Ensembl" id="ENST00000241337.9">
    <molecule id="P28161-1"/>
    <property type="protein sequence ID" value="ENSP00000241337.4"/>
    <property type="gene ID" value="ENSG00000213366.13"/>
</dbReference>
<dbReference type="Ensembl" id="ENST00000442650.5">
    <molecule id="P28161-2"/>
    <property type="protein sequence ID" value="ENSP00000416883.1"/>
    <property type="gene ID" value="ENSG00000213366.13"/>
</dbReference>
<dbReference type="Ensembl" id="ENST00000460717.8">
    <molecule id="P28161-2"/>
    <property type="protein sequence ID" value="ENSP00000435910.2"/>
    <property type="gene ID" value="ENSG00000213366.13"/>
</dbReference>
<dbReference type="GeneID" id="2946"/>
<dbReference type="KEGG" id="hsa:2946"/>
<dbReference type="MANE-Select" id="ENST00000241337.9">
    <property type="protein sequence ID" value="ENSP00000241337.4"/>
    <property type="RefSeq nucleotide sequence ID" value="NM_000848.4"/>
    <property type="RefSeq protein sequence ID" value="NP_000839.1"/>
</dbReference>
<dbReference type="UCSC" id="uc001dyj.4">
    <molecule id="P28161-1"/>
    <property type="organism name" value="human"/>
</dbReference>
<dbReference type="AGR" id="HGNC:4634"/>
<dbReference type="CTD" id="2946"/>
<dbReference type="DisGeNET" id="2946"/>
<dbReference type="GeneCards" id="GSTM2"/>
<dbReference type="HGNC" id="HGNC:4634">
    <property type="gene designation" value="GSTM2"/>
</dbReference>
<dbReference type="HPA" id="ENSG00000213366">
    <property type="expression patterns" value="Low tissue specificity"/>
</dbReference>
<dbReference type="MIM" id="138380">
    <property type="type" value="gene"/>
</dbReference>
<dbReference type="neXtProt" id="NX_P28161"/>
<dbReference type="OpenTargets" id="ENSG00000213366"/>
<dbReference type="PharmGKB" id="PA29023"/>
<dbReference type="VEuPathDB" id="HostDB:ENSG00000213366"/>
<dbReference type="eggNOG" id="KOG1695">
    <property type="taxonomic scope" value="Eukaryota"/>
</dbReference>
<dbReference type="GeneTree" id="ENSGT00940000155416"/>
<dbReference type="InParanoid" id="P28161"/>
<dbReference type="OMA" id="FPICPIT"/>
<dbReference type="OrthoDB" id="4951845at2759"/>
<dbReference type="PAN-GO" id="P28161">
    <property type="GO annotations" value="2 GO annotations based on evolutionary models"/>
</dbReference>
<dbReference type="PhylomeDB" id="P28161"/>
<dbReference type="TreeFam" id="TF353040"/>
<dbReference type="BRENDA" id="2.5.1.18">
    <property type="organism ID" value="2681"/>
</dbReference>
<dbReference type="PathwayCommons" id="P28161"/>
<dbReference type="Reactome" id="R-HSA-156590">
    <property type="pathway name" value="Glutathione conjugation"/>
</dbReference>
<dbReference type="SABIO-RK" id="P28161"/>
<dbReference type="SignaLink" id="P28161"/>
<dbReference type="SIGNOR" id="P28161"/>
<dbReference type="BioGRID-ORCS" id="2946">
    <property type="hits" value="15 hits in 1158 CRISPR screens"/>
</dbReference>
<dbReference type="CD-CODE" id="FB4E32DD">
    <property type="entry name" value="Presynaptic clusters and postsynaptic densities"/>
</dbReference>
<dbReference type="ChiTaRS" id="GSTM2">
    <property type="organism name" value="human"/>
</dbReference>
<dbReference type="EvolutionaryTrace" id="P28161"/>
<dbReference type="GeneWiki" id="GSTM2"/>
<dbReference type="GenomeRNAi" id="2946"/>
<dbReference type="Pharos" id="P28161">
    <property type="development level" value="Tchem"/>
</dbReference>
<dbReference type="PRO" id="PR:P28161"/>
<dbReference type="Proteomes" id="UP000005640">
    <property type="component" value="Chromosome 1"/>
</dbReference>
<dbReference type="RNAct" id="P28161">
    <property type="molecule type" value="protein"/>
</dbReference>
<dbReference type="Bgee" id="ENSG00000213366">
    <property type="expression patterns" value="Expressed in left ovary and 96 other cell types or tissues"/>
</dbReference>
<dbReference type="ExpressionAtlas" id="P28161">
    <property type="expression patterns" value="baseline and differential"/>
</dbReference>
<dbReference type="GO" id="GO:0005737">
    <property type="term" value="C:cytoplasm"/>
    <property type="evidence" value="ECO:0000314"/>
    <property type="project" value="BHF-UCL"/>
</dbReference>
<dbReference type="GO" id="GO:0005829">
    <property type="term" value="C:cytosol"/>
    <property type="evidence" value="ECO:0000314"/>
    <property type="project" value="HPA"/>
</dbReference>
<dbReference type="GO" id="GO:0070062">
    <property type="term" value="C:extracellular exosome"/>
    <property type="evidence" value="ECO:0007005"/>
    <property type="project" value="UniProtKB"/>
</dbReference>
<dbReference type="GO" id="GO:0045171">
    <property type="term" value="C:intercellular bridge"/>
    <property type="evidence" value="ECO:0007669"/>
    <property type="project" value="UniProtKB-ARBA"/>
</dbReference>
<dbReference type="GO" id="GO:0016529">
    <property type="term" value="C:sarcoplasmic reticulum"/>
    <property type="evidence" value="ECO:0000314"/>
    <property type="project" value="BHF-UCL"/>
</dbReference>
<dbReference type="GO" id="GO:0019855">
    <property type="term" value="F:calcium channel inhibitor activity"/>
    <property type="evidence" value="ECO:0000314"/>
    <property type="project" value="BHF-UCL"/>
</dbReference>
<dbReference type="GO" id="GO:0019899">
    <property type="term" value="F:enzyme binding"/>
    <property type="evidence" value="ECO:0000353"/>
    <property type="project" value="BHF-UCL"/>
</dbReference>
<dbReference type="GO" id="GO:0005504">
    <property type="term" value="F:fatty acid binding"/>
    <property type="evidence" value="ECO:0000353"/>
    <property type="project" value="BHF-UCL"/>
</dbReference>
<dbReference type="GO" id="GO:0043295">
    <property type="term" value="F:glutathione binding"/>
    <property type="evidence" value="ECO:0000314"/>
    <property type="project" value="BHF-UCL"/>
</dbReference>
<dbReference type="GO" id="GO:0004602">
    <property type="term" value="F:glutathione peroxidase activity"/>
    <property type="evidence" value="ECO:0000314"/>
    <property type="project" value="BHF-UCL"/>
</dbReference>
<dbReference type="GO" id="GO:0004364">
    <property type="term" value="F:glutathione transferase activity"/>
    <property type="evidence" value="ECO:0000314"/>
    <property type="project" value="UniProtKB"/>
</dbReference>
<dbReference type="GO" id="GO:0042803">
    <property type="term" value="F:protein homodimerization activity"/>
    <property type="evidence" value="ECO:0000353"/>
    <property type="project" value="BHF-UCL"/>
</dbReference>
<dbReference type="GO" id="GO:0044325">
    <property type="term" value="F:transmembrane transporter binding"/>
    <property type="evidence" value="ECO:0000353"/>
    <property type="project" value="BHF-UCL"/>
</dbReference>
<dbReference type="GO" id="GO:0070458">
    <property type="term" value="P:cellular detoxification of nitrogen compound"/>
    <property type="evidence" value="ECO:0000314"/>
    <property type="project" value="BHF-UCL"/>
</dbReference>
<dbReference type="GO" id="GO:0071313">
    <property type="term" value="P:cellular response to caffeine"/>
    <property type="evidence" value="ECO:0000314"/>
    <property type="project" value="BHF-UCL"/>
</dbReference>
<dbReference type="GO" id="GO:0006749">
    <property type="term" value="P:glutathione metabolic process"/>
    <property type="evidence" value="ECO:0000314"/>
    <property type="project" value="UniProtKB"/>
</dbReference>
<dbReference type="GO" id="GO:0051122">
    <property type="term" value="P:hepoxilin biosynthetic process"/>
    <property type="evidence" value="ECO:0000314"/>
    <property type="project" value="UniProtKB"/>
</dbReference>
<dbReference type="GO" id="GO:0043651">
    <property type="term" value="P:linoleic acid metabolic process"/>
    <property type="evidence" value="ECO:0000314"/>
    <property type="project" value="BHF-UCL"/>
</dbReference>
<dbReference type="GO" id="GO:0018916">
    <property type="term" value="P:nitrobenzene metabolic process"/>
    <property type="evidence" value="ECO:0000314"/>
    <property type="project" value="BHF-UCL"/>
</dbReference>
<dbReference type="GO" id="GO:0010881">
    <property type="term" value="P:regulation of cardiac muscle contraction by regulation of the release of sequestered calcium ion"/>
    <property type="evidence" value="ECO:0000314"/>
    <property type="project" value="BHF-UCL"/>
</dbReference>
<dbReference type="GO" id="GO:0010880">
    <property type="term" value="P:regulation of release of sequestered calcium ion into cytosol by sarcoplasmic reticulum"/>
    <property type="evidence" value="ECO:0000314"/>
    <property type="project" value="BHF-UCL"/>
</dbReference>
<dbReference type="GO" id="GO:0014809">
    <property type="term" value="P:regulation of skeletal muscle contraction by regulation of release of sequestered calcium ion"/>
    <property type="evidence" value="ECO:0000314"/>
    <property type="project" value="BHF-UCL"/>
</dbReference>
<dbReference type="GO" id="GO:0055119">
    <property type="term" value="P:relaxation of cardiac muscle"/>
    <property type="evidence" value="ECO:0000304"/>
    <property type="project" value="BHF-UCL"/>
</dbReference>
<dbReference type="GO" id="GO:0042178">
    <property type="term" value="P:xenobiotic catabolic process"/>
    <property type="evidence" value="ECO:0000314"/>
    <property type="project" value="UniProtKB"/>
</dbReference>
<dbReference type="CDD" id="cd03209">
    <property type="entry name" value="GST_C_Mu"/>
    <property type="match status" value="1"/>
</dbReference>
<dbReference type="CDD" id="cd03075">
    <property type="entry name" value="GST_N_Mu"/>
    <property type="match status" value="1"/>
</dbReference>
<dbReference type="FunFam" id="1.20.1050.10:FF:000083">
    <property type="entry name" value="Glutathione S-transferase Mu 1"/>
    <property type="match status" value="1"/>
</dbReference>
<dbReference type="FunFam" id="3.40.30.10:FF:000603">
    <property type="entry name" value="Glutathione S-transferase Mu 1"/>
    <property type="match status" value="1"/>
</dbReference>
<dbReference type="Gene3D" id="1.20.1050.10">
    <property type="match status" value="1"/>
</dbReference>
<dbReference type="Gene3D" id="3.40.30.10">
    <property type="entry name" value="Glutaredoxin"/>
    <property type="match status" value="1"/>
</dbReference>
<dbReference type="InterPro" id="IPR010987">
    <property type="entry name" value="Glutathione-S-Trfase_C-like"/>
</dbReference>
<dbReference type="InterPro" id="IPR036282">
    <property type="entry name" value="Glutathione-S-Trfase_C_sf"/>
</dbReference>
<dbReference type="InterPro" id="IPR040079">
    <property type="entry name" value="Glutathione_S-Trfase"/>
</dbReference>
<dbReference type="InterPro" id="IPR004045">
    <property type="entry name" value="Glutathione_S-Trfase_N"/>
</dbReference>
<dbReference type="InterPro" id="IPR004046">
    <property type="entry name" value="GST_C"/>
</dbReference>
<dbReference type="InterPro" id="IPR003081">
    <property type="entry name" value="GST_mu"/>
</dbReference>
<dbReference type="InterPro" id="IPR050213">
    <property type="entry name" value="GST_superfamily"/>
</dbReference>
<dbReference type="InterPro" id="IPR036249">
    <property type="entry name" value="Thioredoxin-like_sf"/>
</dbReference>
<dbReference type="PANTHER" id="PTHR11571">
    <property type="entry name" value="GLUTATHIONE S-TRANSFERASE"/>
    <property type="match status" value="1"/>
</dbReference>
<dbReference type="PANTHER" id="PTHR11571:SF254">
    <property type="entry name" value="GLUTATHIONE S-TRANSFERASE MU 2"/>
    <property type="match status" value="1"/>
</dbReference>
<dbReference type="Pfam" id="PF00043">
    <property type="entry name" value="GST_C"/>
    <property type="match status" value="1"/>
</dbReference>
<dbReference type="Pfam" id="PF02798">
    <property type="entry name" value="GST_N"/>
    <property type="match status" value="1"/>
</dbReference>
<dbReference type="PRINTS" id="PR01267">
    <property type="entry name" value="GSTRNSFRASEM"/>
</dbReference>
<dbReference type="SFLD" id="SFLDG01205">
    <property type="entry name" value="AMPS.1"/>
    <property type="match status" value="1"/>
</dbReference>
<dbReference type="SFLD" id="SFLDS00019">
    <property type="entry name" value="Glutathione_Transferase_(cytos"/>
    <property type="match status" value="1"/>
</dbReference>
<dbReference type="SUPFAM" id="SSF47616">
    <property type="entry name" value="GST C-terminal domain-like"/>
    <property type="match status" value="1"/>
</dbReference>
<dbReference type="SUPFAM" id="SSF52833">
    <property type="entry name" value="Thioredoxin-like"/>
    <property type="match status" value="1"/>
</dbReference>
<dbReference type="PROSITE" id="PS50405">
    <property type="entry name" value="GST_CTER"/>
    <property type="match status" value="1"/>
</dbReference>
<dbReference type="PROSITE" id="PS50404">
    <property type="entry name" value="GST_NTER"/>
    <property type="match status" value="1"/>
</dbReference>
<proteinExistence type="evidence at protein level"/>
<reference key="1">
    <citation type="journal article" date="1991" name="Proc. Natl. Acad. Sci. U.S.A.">
        <title>Cloning, expression, and characterization of a class-mu glutathione transferase from human muscle, the product of the GST4 locus.</title>
        <authorList>
            <person name="Vorachek W.R."/>
            <person name="Pearson W.R."/>
            <person name="Rule G.S."/>
        </authorList>
    </citation>
    <scope>NUCLEOTIDE SEQUENCE [MRNA] (ISOFORM 1)</scope>
    <source>
        <tissue>Muscle</tissue>
    </source>
</reference>
<reference key="2">
    <citation type="journal article" date="2004" name="Nat. Genet.">
        <title>Complete sequencing and characterization of 21,243 full-length human cDNAs.</title>
        <authorList>
            <person name="Ota T."/>
            <person name="Suzuki Y."/>
            <person name="Nishikawa T."/>
            <person name="Otsuki T."/>
            <person name="Sugiyama T."/>
            <person name="Irie R."/>
            <person name="Wakamatsu A."/>
            <person name="Hayashi K."/>
            <person name="Sato H."/>
            <person name="Nagai K."/>
            <person name="Kimura K."/>
            <person name="Makita H."/>
            <person name="Sekine M."/>
            <person name="Obayashi M."/>
            <person name="Nishi T."/>
            <person name="Shibahara T."/>
            <person name="Tanaka T."/>
            <person name="Ishii S."/>
            <person name="Yamamoto J."/>
            <person name="Saito K."/>
            <person name="Kawai Y."/>
            <person name="Isono Y."/>
            <person name="Nakamura Y."/>
            <person name="Nagahari K."/>
            <person name="Murakami K."/>
            <person name="Yasuda T."/>
            <person name="Iwayanagi T."/>
            <person name="Wagatsuma M."/>
            <person name="Shiratori A."/>
            <person name="Sudo H."/>
            <person name="Hosoiri T."/>
            <person name="Kaku Y."/>
            <person name="Kodaira H."/>
            <person name="Kondo H."/>
            <person name="Sugawara M."/>
            <person name="Takahashi M."/>
            <person name="Kanda K."/>
            <person name="Yokoi T."/>
            <person name="Furuya T."/>
            <person name="Kikkawa E."/>
            <person name="Omura Y."/>
            <person name="Abe K."/>
            <person name="Kamihara K."/>
            <person name="Katsuta N."/>
            <person name="Sato K."/>
            <person name="Tanikawa M."/>
            <person name="Yamazaki M."/>
            <person name="Ninomiya K."/>
            <person name="Ishibashi T."/>
            <person name="Yamashita H."/>
            <person name="Murakawa K."/>
            <person name="Fujimori K."/>
            <person name="Tanai H."/>
            <person name="Kimata M."/>
            <person name="Watanabe M."/>
            <person name="Hiraoka S."/>
            <person name="Chiba Y."/>
            <person name="Ishida S."/>
            <person name="Ono Y."/>
            <person name="Takiguchi S."/>
            <person name="Watanabe S."/>
            <person name="Yosida M."/>
            <person name="Hotuta T."/>
            <person name="Kusano J."/>
            <person name="Kanehori K."/>
            <person name="Takahashi-Fujii A."/>
            <person name="Hara H."/>
            <person name="Tanase T.-O."/>
            <person name="Nomura Y."/>
            <person name="Togiya S."/>
            <person name="Komai F."/>
            <person name="Hara R."/>
            <person name="Takeuchi K."/>
            <person name="Arita M."/>
            <person name="Imose N."/>
            <person name="Musashino K."/>
            <person name="Yuuki H."/>
            <person name="Oshima A."/>
            <person name="Sasaki N."/>
            <person name="Aotsuka S."/>
            <person name="Yoshikawa Y."/>
            <person name="Matsunawa H."/>
            <person name="Ichihara T."/>
            <person name="Shiohata N."/>
            <person name="Sano S."/>
            <person name="Moriya S."/>
            <person name="Momiyama H."/>
            <person name="Satoh N."/>
            <person name="Takami S."/>
            <person name="Terashima Y."/>
            <person name="Suzuki O."/>
            <person name="Nakagawa S."/>
            <person name="Senoh A."/>
            <person name="Mizoguchi H."/>
            <person name="Goto Y."/>
            <person name="Shimizu F."/>
            <person name="Wakebe H."/>
            <person name="Hishigaki H."/>
            <person name="Watanabe T."/>
            <person name="Sugiyama A."/>
            <person name="Takemoto M."/>
            <person name="Kawakami B."/>
            <person name="Yamazaki M."/>
            <person name="Watanabe K."/>
            <person name="Kumagai A."/>
            <person name="Itakura S."/>
            <person name="Fukuzumi Y."/>
            <person name="Fujimori Y."/>
            <person name="Komiyama M."/>
            <person name="Tashiro H."/>
            <person name="Tanigami A."/>
            <person name="Fujiwara T."/>
            <person name="Ono T."/>
            <person name="Yamada K."/>
            <person name="Fujii Y."/>
            <person name="Ozaki K."/>
            <person name="Hirao M."/>
            <person name="Ohmori Y."/>
            <person name="Kawabata A."/>
            <person name="Hikiji T."/>
            <person name="Kobatake N."/>
            <person name="Inagaki H."/>
            <person name="Ikema Y."/>
            <person name="Okamoto S."/>
            <person name="Okitani R."/>
            <person name="Kawakami T."/>
            <person name="Noguchi S."/>
            <person name="Itoh T."/>
            <person name="Shigeta K."/>
            <person name="Senba T."/>
            <person name="Matsumura K."/>
            <person name="Nakajima Y."/>
            <person name="Mizuno T."/>
            <person name="Morinaga M."/>
            <person name="Sasaki M."/>
            <person name="Togashi T."/>
            <person name="Oyama M."/>
            <person name="Hata H."/>
            <person name="Watanabe M."/>
            <person name="Komatsu T."/>
            <person name="Mizushima-Sugano J."/>
            <person name="Satoh T."/>
            <person name="Shirai Y."/>
            <person name="Takahashi Y."/>
            <person name="Nakagawa K."/>
            <person name="Okumura K."/>
            <person name="Nagase T."/>
            <person name="Nomura N."/>
            <person name="Kikuchi H."/>
            <person name="Masuho Y."/>
            <person name="Yamashita R."/>
            <person name="Nakai K."/>
            <person name="Yada T."/>
            <person name="Nakamura Y."/>
            <person name="Ohara O."/>
            <person name="Isogai T."/>
            <person name="Sugano S."/>
        </authorList>
    </citation>
    <scope>NUCLEOTIDE SEQUENCE [LARGE SCALE MRNA]</scope>
    <source>
        <tissue>Brain</tissue>
    </source>
</reference>
<reference key="3">
    <citation type="submission" date="2004-10" db="EMBL/GenBank/DDBJ databases">
        <title>Cloning of human full-length CDSs in BD Creator(TM) system donor vector.</title>
        <authorList>
            <person name="Kalnine N."/>
            <person name="Chen X."/>
            <person name="Rolfs A."/>
            <person name="Halleck A."/>
            <person name="Hines L."/>
            <person name="Eisenstein S."/>
            <person name="Koundinya M."/>
            <person name="Raphael J."/>
            <person name="Moreira D."/>
            <person name="Kelley T."/>
            <person name="LaBaer J."/>
            <person name="Lin Y."/>
            <person name="Phelan M."/>
            <person name="Farmer A."/>
        </authorList>
    </citation>
    <scope>NUCLEOTIDE SEQUENCE [LARGE SCALE MRNA] (ISOFORM 1)</scope>
</reference>
<reference key="4">
    <citation type="journal article" date="2006" name="Nature">
        <title>The DNA sequence and biological annotation of human chromosome 1.</title>
        <authorList>
            <person name="Gregory S.G."/>
            <person name="Barlow K.F."/>
            <person name="McLay K.E."/>
            <person name="Kaul R."/>
            <person name="Swarbreck D."/>
            <person name="Dunham A."/>
            <person name="Scott C.E."/>
            <person name="Howe K.L."/>
            <person name="Woodfine K."/>
            <person name="Spencer C.C.A."/>
            <person name="Jones M.C."/>
            <person name="Gillson C."/>
            <person name="Searle S."/>
            <person name="Zhou Y."/>
            <person name="Kokocinski F."/>
            <person name="McDonald L."/>
            <person name="Evans R."/>
            <person name="Phillips K."/>
            <person name="Atkinson A."/>
            <person name="Cooper R."/>
            <person name="Jones C."/>
            <person name="Hall R.E."/>
            <person name="Andrews T.D."/>
            <person name="Lloyd C."/>
            <person name="Ainscough R."/>
            <person name="Almeida J.P."/>
            <person name="Ambrose K.D."/>
            <person name="Anderson F."/>
            <person name="Andrew R.W."/>
            <person name="Ashwell R.I.S."/>
            <person name="Aubin K."/>
            <person name="Babbage A.K."/>
            <person name="Bagguley C.L."/>
            <person name="Bailey J."/>
            <person name="Beasley H."/>
            <person name="Bethel G."/>
            <person name="Bird C.P."/>
            <person name="Bray-Allen S."/>
            <person name="Brown J.Y."/>
            <person name="Brown A.J."/>
            <person name="Buckley D."/>
            <person name="Burton J."/>
            <person name="Bye J."/>
            <person name="Carder C."/>
            <person name="Chapman J.C."/>
            <person name="Clark S.Y."/>
            <person name="Clarke G."/>
            <person name="Clee C."/>
            <person name="Cobley V."/>
            <person name="Collier R.E."/>
            <person name="Corby N."/>
            <person name="Coville G.J."/>
            <person name="Davies J."/>
            <person name="Deadman R."/>
            <person name="Dunn M."/>
            <person name="Earthrowl M."/>
            <person name="Ellington A.G."/>
            <person name="Errington H."/>
            <person name="Frankish A."/>
            <person name="Frankland J."/>
            <person name="French L."/>
            <person name="Garner P."/>
            <person name="Garnett J."/>
            <person name="Gay L."/>
            <person name="Ghori M.R.J."/>
            <person name="Gibson R."/>
            <person name="Gilby L.M."/>
            <person name="Gillett W."/>
            <person name="Glithero R.J."/>
            <person name="Grafham D.V."/>
            <person name="Griffiths C."/>
            <person name="Griffiths-Jones S."/>
            <person name="Grocock R."/>
            <person name="Hammond S."/>
            <person name="Harrison E.S.I."/>
            <person name="Hart E."/>
            <person name="Haugen E."/>
            <person name="Heath P.D."/>
            <person name="Holmes S."/>
            <person name="Holt K."/>
            <person name="Howden P.J."/>
            <person name="Hunt A.R."/>
            <person name="Hunt S.E."/>
            <person name="Hunter G."/>
            <person name="Isherwood J."/>
            <person name="James R."/>
            <person name="Johnson C."/>
            <person name="Johnson D."/>
            <person name="Joy A."/>
            <person name="Kay M."/>
            <person name="Kershaw J.K."/>
            <person name="Kibukawa M."/>
            <person name="Kimberley A.M."/>
            <person name="King A."/>
            <person name="Knights A.J."/>
            <person name="Lad H."/>
            <person name="Laird G."/>
            <person name="Lawlor S."/>
            <person name="Leongamornlert D.A."/>
            <person name="Lloyd D.M."/>
            <person name="Loveland J."/>
            <person name="Lovell J."/>
            <person name="Lush M.J."/>
            <person name="Lyne R."/>
            <person name="Martin S."/>
            <person name="Mashreghi-Mohammadi M."/>
            <person name="Matthews L."/>
            <person name="Matthews N.S.W."/>
            <person name="McLaren S."/>
            <person name="Milne S."/>
            <person name="Mistry S."/>
            <person name="Moore M.J.F."/>
            <person name="Nickerson T."/>
            <person name="O'Dell C.N."/>
            <person name="Oliver K."/>
            <person name="Palmeiri A."/>
            <person name="Palmer S.A."/>
            <person name="Parker A."/>
            <person name="Patel D."/>
            <person name="Pearce A.V."/>
            <person name="Peck A.I."/>
            <person name="Pelan S."/>
            <person name="Phelps K."/>
            <person name="Phillimore B.J."/>
            <person name="Plumb R."/>
            <person name="Rajan J."/>
            <person name="Raymond C."/>
            <person name="Rouse G."/>
            <person name="Saenphimmachak C."/>
            <person name="Sehra H.K."/>
            <person name="Sheridan E."/>
            <person name="Shownkeen R."/>
            <person name="Sims S."/>
            <person name="Skuce C.D."/>
            <person name="Smith M."/>
            <person name="Steward C."/>
            <person name="Subramanian S."/>
            <person name="Sycamore N."/>
            <person name="Tracey A."/>
            <person name="Tromans A."/>
            <person name="Van Helmond Z."/>
            <person name="Wall M."/>
            <person name="Wallis J.M."/>
            <person name="White S."/>
            <person name="Whitehead S.L."/>
            <person name="Wilkinson J.E."/>
            <person name="Willey D.L."/>
            <person name="Williams H."/>
            <person name="Wilming L."/>
            <person name="Wray P.W."/>
            <person name="Wu Z."/>
            <person name="Coulson A."/>
            <person name="Vaudin M."/>
            <person name="Sulston J.E."/>
            <person name="Durbin R.M."/>
            <person name="Hubbard T."/>
            <person name="Wooster R."/>
            <person name="Dunham I."/>
            <person name="Carter N.P."/>
            <person name="McVean G."/>
            <person name="Ross M.T."/>
            <person name="Harrow J."/>
            <person name="Olson M.V."/>
            <person name="Beck S."/>
            <person name="Rogers J."/>
            <person name="Bentley D.R."/>
        </authorList>
    </citation>
    <scope>NUCLEOTIDE SEQUENCE [LARGE SCALE GENOMIC DNA]</scope>
</reference>
<reference key="5">
    <citation type="journal article" date="2004" name="Genome Res.">
        <title>The status, quality, and expansion of the NIH full-length cDNA project: the Mammalian Gene Collection (MGC).</title>
        <authorList>
            <consortium name="The MGC Project Team"/>
        </authorList>
    </citation>
    <scope>NUCLEOTIDE SEQUENCE [LARGE SCALE MRNA] (ISOFORM 1)</scope>
    <source>
        <tissue>Brain</tissue>
    </source>
</reference>
<reference key="6">
    <citation type="journal article" date="1993" name="Biochem. J.">
        <title>Molecular cloning and heterologous expression of an alternatively spliced human Mu class glutathione S-transferase transcript.</title>
        <authorList>
            <person name="Ross V.L."/>
            <person name="Board P.G."/>
        </authorList>
    </citation>
    <scope>PROTEIN SEQUENCE OF N-TERMINUS</scope>
    <source>
        <tissue>Testis</tissue>
    </source>
</reference>
<reference key="7">
    <citation type="submission" date="2007-03" db="UniProtKB">
        <authorList>
            <person name="Lubec G."/>
            <person name="Vishwanath V."/>
        </authorList>
    </citation>
    <scope>PROTEIN SEQUENCE OF 53-69 AND 153-182</scope>
    <scope>IDENTIFICATION BY MASS SPECTROMETRY</scope>
    <source>
        <tissue>Brain</tissue>
        <tissue>Cajal-Retzius cell</tissue>
    </source>
</reference>
<reference key="8">
    <citation type="journal article" date="2011" name="BMC Syst. Biol.">
        <title>Initial characterization of the human central proteome.</title>
        <authorList>
            <person name="Burkard T.R."/>
            <person name="Planyavsky M."/>
            <person name="Kaupe I."/>
            <person name="Breitwieser F.P."/>
            <person name="Buerckstuemmer T."/>
            <person name="Bennett K.L."/>
            <person name="Superti-Furga G."/>
            <person name="Colinge J."/>
        </authorList>
    </citation>
    <scope>IDENTIFICATION BY MASS SPECTROMETRY [LARGE SCALE ANALYSIS]</scope>
</reference>
<reference key="9">
    <citation type="journal article" date="2011" name="Lipids">
        <title>Biosynthesis of 14,15-hepoxilins in human l1236 Hodgkin lymphoma cells and eosinophils.</title>
        <authorList>
            <person name="Brunnstroem A."/>
            <person name="Hamberg M."/>
            <person name="Griffiths W.J."/>
            <person name="Mannervik B."/>
            <person name="Claesson H.E."/>
        </authorList>
    </citation>
    <scope>FUNCTION</scope>
    <scope>CATALYTIC ACTIVITY</scope>
</reference>
<reference key="10">
    <citation type="journal article" date="1994" name="J. Mol. Biol.">
        <title>Crystal structure of human class mu glutathione transferase GSTM2-2. Effects of lattice packing on conformational heterogeneity.</title>
        <authorList>
            <person name="Raghunathan S."/>
            <person name="Chandross R.J."/>
            <person name="Kretsinger R.H."/>
            <person name="Allison T.J."/>
            <person name="Penington C.J."/>
            <person name="Rule G.S."/>
        </authorList>
    </citation>
    <scope>X-RAY CRYSTALLOGRAPHY (1.85 ANGSTROMS) IN COMPLEX WITH GLUTATHIONE</scope>
    <scope>SUBUNIT</scope>
</reference>
<reference key="11">
    <citation type="journal article" date="2006" name="Proc. Natl. Acad. Sci. U.S.A.">
        <title>Alternative mutations of a positively selected residue elicit gain or loss of functionalities in enzyme evolution.</title>
        <authorList>
            <person name="Norrgard M.A."/>
            <person name="Ivarsson Y."/>
            <person name="Tars K."/>
            <person name="Mannervik B."/>
        </authorList>
    </citation>
    <scope>X-RAY CRYSTALLOGRAPHY (1.35 ANGSTROMS) IN COMPLEX WITH GLUTATHIONE ANALOG</scope>
    <scope>FUNCTION</scope>
    <scope>MUTAGENESIS OF THR-210</scope>
    <scope>CATALYTIC ACTIVITY</scope>
</reference>
<reference key="12">
    <citation type="journal article" date="2009" name="Cancer Res.">
        <title>Structural basis for the binding of the anticancer compound 6-(7-nitro-2,1,3-benzoxadiazol-4-ylthio)hexanol to human glutathione s-transferases.</title>
        <authorList>
            <person name="Federici L."/>
            <person name="Lo Sterzo C."/>
            <person name="Pezzola S."/>
            <person name="Di Matteo A."/>
            <person name="Scaloni F."/>
            <person name="Federici G."/>
            <person name="Caccuri A.M."/>
        </authorList>
    </citation>
    <scope>X-RAY CRYSTALLOGRAPHY (2.5 ANGSTROMS) IN COMPLEX WITH GLUTATHIONE AND NBDHEX</scope>
</reference>
<keyword id="KW-0002">3D-structure</keyword>
<keyword id="KW-0025">Alternative splicing</keyword>
<keyword id="KW-0963">Cytoplasm</keyword>
<keyword id="KW-0903">Direct protein sequencing</keyword>
<keyword id="KW-0443">Lipid metabolism</keyword>
<keyword id="KW-0597">Phosphoprotein</keyword>
<keyword id="KW-1267">Proteomics identification</keyword>
<keyword id="KW-1185">Reference proteome</keyword>
<keyword id="KW-0808">Transferase</keyword>
<organism>
    <name type="scientific">Homo sapiens</name>
    <name type="common">Human</name>
    <dbReference type="NCBI Taxonomy" id="9606"/>
    <lineage>
        <taxon>Eukaryota</taxon>
        <taxon>Metazoa</taxon>
        <taxon>Chordata</taxon>
        <taxon>Craniata</taxon>
        <taxon>Vertebrata</taxon>
        <taxon>Euteleostomi</taxon>
        <taxon>Mammalia</taxon>
        <taxon>Eutheria</taxon>
        <taxon>Euarchontoglires</taxon>
        <taxon>Primates</taxon>
        <taxon>Haplorrhini</taxon>
        <taxon>Catarrhini</taxon>
        <taxon>Hominidae</taxon>
        <taxon>Homo</taxon>
    </lineage>
</organism>
<accession>P28161</accession>
<accession>B4DRY4</accession>
<accession>E9PEM9</accession>
<accession>Q2M318</accession>
<accession>Q5TZY5</accession>
<accession>Q8WWE1</accession>
<evidence type="ECO:0000250" key="1"/>
<evidence type="ECO:0000250" key="2">
    <source>
        <dbReference type="UniProtKB" id="P08010"/>
    </source>
</evidence>
<evidence type="ECO:0000269" key="3">
    <source>
    </source>
</evidence>
<evidence type="ECO:0000269" key="4">
    <source>
    </source>
</evidence>
<evidence type="ECO:0000269" key="5">
    <source>
    </source>
</evidence>
<evidence type="ECO:0000269" key="6">
    <source>
    </source>
</evidence>
<evidence type="ECO:0000305" key="7"/>
<evidence type="ECO:0000305" key="8">
    <source>
    </source>
</evidence>
<evidence type="ECO:0000305" key="9">
    <source>
    </source>
</evidence>
<evidence type="ECO:0000312" key="10">
    <source>
        <dbReference type="HGNC" id="HGNC:4634"/>
    </source>
</evidence>
<evidence type="ECO:0007829" key="11">
    <source>
        <dbReference type="PDB" id="1HNA"/>
    </source>
</evidence>
<evidence type="ECO:0007829" key="12">
    <source>
        <dbReference type="PDB" id="1HNC"/>
    </source>
</evidence>
<evidence type="ECO:0007829" key="13">
    <source>
        <dbReference type="PDB" id="1XW5"/>
    </source>
</evidence>
<evidence type="ECO:0007829" key="14">
    <source>
        <dbReference type="PDB" id="2C4J"/>
    </source>
</evidence>
<protein>
    <recommendedName>
        <fullName evidence="7">Glutathione S-transferase Mu 2</fullName>
        <ecNumber evidence="3">2.5.1.18</ecNumber>
    </recommendedName>
    <alternativeName>
        <fullName>GST class-mu 2</fullName>
    </alternativeName>
    <alternativeName>
        <fullName>GSTM2-2</fullName>
    </alternativeName>
</protein>
<sequence>MPMTLGYWNIRGLAHSIRLLLEYTDSSYEEKKYTMGDAPDYDRSQWLNEKFKLGLDFPNLPYLIDGTHKITQSNAILRYIARKHNLCGESEKEQIREDILENQFMDSRMQLAKLCYDPDFEKLKPEYLQALPEMLKLYSQFLGKQPWFLGDKITFVDFIAYDVLERNQVFEPSCLDAFPNLKDFISRFEGLEKISAYMKSSRFLPRPVFTKMAVWGNK</sequence>
<comment type="function">
    <text evidence="3 5">Conjugation of reduced glutathione to a wide number of exogenous and endogenous hydrophobic electrophiles. Participates in the formation of novel hepoxilin regioisomers (PubMed:21046276).</text>
</comment>
<comment type="catalytic activity">
    <reaction evidence="3">
        <text>RX + glutathione = an S-substituted glutathione + a halide anion + H(+)</text>
        <dbReference type="Rhea" id="RHEA:16437"/>
        <dbReference type="ChEBI" id="CHEBI:15378"/>
        <dbReference type="ChEBI" id="CHEBI:16042"/>
        <dbReference type="ChEBI" id="CHEBI:17792"/>
        <dbReference type="ChEBI" id="CHEBI:57925"/>
        <dbReference type="ChEBI" id="CHEBI:90779"/>
        <dbReference type="EC" id="2.5.1.18"/>
    </reaction>
    <physiologicalReaction direction="left-to-right" evidence="8">
        <dbReference type="Rhea" id="RHEA:16438"/>
    </physiologicalReaction>
</comment>
<comment type="catalytic activity">
    <reaction evidence="5">
        <text>11(S)-hydroxy-14(S),15(S)-epoxy-(5Z,8Z,12E)-eicosatrienoate + glutathione = (11S,15S)-dihydroxy-14(R)-S-glutathionyl-(5Z,8Z,12E)-eicosatrienoate</text>
        <dbReference type="Rhea" id="RHEA:50260"/>
        <dbReference type="ChEBI" id="CHEBI:57925"/>
        <dbReference type="ChEBI" id="CHEBI:132200"/>
        <dbReference type="ChEBI" id="CHEBI:132201"/>
    </reaction>
    <physiologicalReaction direction="left-to-right" evidence="9">
        <dbReference type="Rhea" id="RHEA:50261"/>
    </physiologicalReaction>
</comment>
<comment type="subunit">
    <text evidence="3 4 6">Homodimer.</text>
</comment>
<comment type="interaction">
    <interactant intactId="EBI-9023362">
        <id>P28161</id>
    </interactant>
    <interactant intactId="EBI-4312072">
        <id>P46439</id>
        <label>GSTM5</label>
    </interactant>
    <organismsDiffer>false</organismsDiffer>
    <experiments>8</experiments>
</comment>
<comment type="subcellular location">
    <subcellularLocation>
        <location>Cytoplasm</location>
    </subcellularLocation>
</comment>
<comment type="alternative products">
    <event type="alternative splicing"/>
    <isoform>
        <id>P28161-1</id>
        <name>1</name>
        <sequence type="displayed"/>
    </isoform>
    <isoform>
        <id>P28161-2</id>
        <name>2</name>
        <sequence type="described" ref="VSP_045614"/>
    </isoform>
</comment>
<comment type="tissue specificity">
    <text>Muscle.</text>
</comment>
<comment type="similarity">
    <text evidence="7">Belongs to the GST superfamily. Mu family.</text>
</comment>
<gene>
    <name evidence="10" type="primary">GSTM2</name>
    <name type="synonym">GST4</name>
</gene>